<feature type="chain" id="PRO_0000245573" description="NADPH--cytochrome P450 reductase">
    <location>
        <begin position="1"/>
        <end position="678"/>
    </location>
</feature>
<feature type="topological domain" description="Lumenal" evidence="2">
    <location>
        <begin position="1"/>
        <end position="21"/>
    </location>
</feature>
<feature type="transmembrane region" description="Helical" evidence="2">
    <location>
        <begin position="22"/>
        <end position="42"/>
    </location>
</feature>
<feature type="topological domain" description="Cytoplasmic" evidence="2">
    <location>
        <begin position="43"/>
        <end position="678"/>
    </location>
</feature>
<feature type="domain" description="Flavodoxin-like" evidence="2">
    <location>
        <begin position="80"/>
        <end position="224"/>
    </location>
</feature>
<feature type="domain" description="FAD-binding FR-type" evidence="2">
    <location>
        <begin position="279"/>
        <end position="521"/>
    </location>
</feature>
<feature type="binding site" evidence="2">
    <location>
        <begin position="86"/>
        <end position="91"/>
    </location>
    <ligand>
        <name>FMN</name>
        <dbReference type="ChEBI" id="CHEBI:58210"/>
    </ligand>
</feature>
<feature type="binding site" evidence="2">
    <location>
        <begin position="138"/>
        <end position="141"/>
    </location>
    <ligand>
        <name>FMN</name>
        <dbReference type="ChEBI" id="CHEBI:58210"/>
    </ligand>
</feature>
<feature type="binding site" evidence="2">
    <location>
        <begin position="173"/>
        <end position="182"/>
    </location>
    <ligand>
        <name>FMN</name>
        <dbReference type="ChEBI" id="CHEBI:58210"/>
    </ligand>
</feature>
<feature type="binding site" evidence="2">
    <location>
        <position position="208"/>
    </location>
    <ligand>
        <name>FMN</name>
        <dbReference type="ChEBI" id="CHEBI:58210"/>
    </ligand>
</feature>
<feature type="binding site" evidence="2">
    <location>
        <position position="298"/>
    </location>
    <ligand>
        <name>NADP(+)</name>
        <dbReference type="ChEBI" id="CHEBI:58349"/>
    </ligand>
</feature>
<feature type="binding site" evidence="2">
    <location>
        <position position="424"/>
    </location>
    <ligand>
        <name>FAD</name>
        <dbReference type="ChEBI" id="CHEBI:57692"/>
    </ligand>
</feature>
<feature type="binding site" evidence="2">
    <location>
        <begin position="454"/>
        <end position="457"/>
    </location>
    <ligand>
        <name>FAD</name>
        <dbReference type="ChEBI" id="CHEBI:57692"/>
    </ligand>
</feature>
<feature type="binding site" evidence="2">
    <location>
        <begin position="472"/>
        <end position="474"/>
    </location>
    <ligand>
        <name>FAD</name>
        <dbReference type="ChEBI" id="CHEBI:57692"/>
    </ligand>
</feature>
<feature type="binding site" evidence="2">
    <location>
        <position position="478"/>
    </location>
    <ligand>
        <name>FAD</name>
        <dbReference type="ChEBI" id="CHEBI:57692"/>
    </ligand>
</feature>
<feature type="binding site" evidence="2">
    <location>
        <begin position="488"/>
        <end position="491"/>
    </location>
    <ligand>
        <name>FAD</name>
        <dbReference type="ChEBI" id="CHEBI:57692"/>
    </ligand>
</feature>
<feature type="binding site" evidence="2">
    <location>
        <position position="535"/>
    </location>
    <ligand>
        <name>NADP(+)</name>
        <dbReference type="ChEBI" id="CHEBI:58349"/>
    </ligand>
</feature>
<feature type="binding site" evidence="2">
    <location>
        <begin position="596"/>
        <end position="597"/>
    </location>
    <ligand>
        <name>NADP(+)</name>
        <dbReference type="ChEBI" id="CHEBI:58349"/>
    </ligand>
</feature>
<feature type="binding site" evidence="2">
    <location>
        <begin position="602"/>
        <end position="606"/>
    </location>
    <ligand>
        <name>NADP(+)</name>
        <dbReference type="ChEBI" id="CHEBI:58349"/>
    </ligand>
</feature>
<feature type="binding site" evidence="2">
    <location>
        <position position="639"/>
    </location>
    <ligand>
        <name>NADP(+)</name>
        <dbReference type="ChEBI" id="CHEBI:58349"/>
    </ligand>
</feature>
<feature type="binding site" evidence="2">
    <location>
        <position position="677"/>
    </location>
    <ligand>
        <name>FAD</name>
        <dbReference type="ChEBI" id="CHEBI:57692"/>
    </ligand>
</feature>
<feature type="modified residue" description="Phosphoserine" evidence="1">
    <location>
        <position position="63"/>
    </location>
</feature>
<keyword id="KW-0256">Endoplasmic reticulum</keyword>
<keyword id="KW-0274">FAD</keyword>
<keyword id="KW-0285">Flavoprotein</keyword>
<keyword id="KW-0288">FMN</keyword>
<keyword id="KW-0472">Membrane</keyword>
<keyword id="KW-0521">NADP</keyword>
<keyword id="KW-0560">Oxidoreductase</keyword>
<keyword id="KW-0597">Phosphoprotein</keyword>
<keyword id="KW-1185">Reference proteome</keyword>
<keyword id="KW-0812">Transmembrane</keyword>
<keyword id="KW-1133">Transmembrane helix</keyword>
<organism>
    <name type="scientific">Bos taurus</name>
    <name type="common">Bovine</name>
    <dbReference type="NCBI Taxonomy" id="9913"/>
    <lineage>
        <taxon>Eukaryota</taxon>
        <taxon>Metazoa</taxon>
        <taxon>Chordata</taxon>
        <taxon>Craniata</taxon>
        <taxon>Vertebrata</taxon>
        <taxon>Euteleostomi</taxon>
        <taxon>Mammalia</taxon>
        <taxon>Eutheria</taxon>
        <taxon>Laurasiatheria</taxon>
        <taxon>Artiodactyla</taxon>
        <taxon>Ruminantia</taxon>
        <taxon>Pecora</taxon>
        <taxon>Bovidae</taxon>
        <taxon>Bovinae</taxon>
        <taxon>Bos</taxon>
    </lineage>
</organism>
<gene>
    <name evidence="2" type="primary">POR</name>
</gene>
<name>NCPR_BOVIN</name>
<sequence length="678" mass="77021">MADSNMDAGTTTSEMVAEEVSLFSTTDVILFSLIVGVMTYWFLFRKKKEEVPEFTKIQTTTSSVKDRSFVEKMKKTGRNIIVFYGSQTGTAEEFANRLSKDAHRYGMRGMAADPEEYDLADLSSLPEIEKALAIFCMATYGEGDPTDNAQDFYDWLQETDVDLSGVKYAVFALGNKTYEHFNAMGKYVDKRLEQLGAQRIFDLGLGDDDGNLEEDFITWREQFWPAVCEHFGVEATGEESSIRQYELMVHTDMDMAKVYTGEMGRLKSYENQKPPFDAKNPFLAVVTTNRKLNQGTERHLMHLELDISDSKIRYESGDHVAVYPANDSALVNQLGEILGADLDIIMSLNNLDEESNKKHPFPCPTSYRTALTYYLDITNPPRTNVLYELAQYASEPTEHEQLRKMASSSGEGKELYLRWVLEARRHILAILQDYPSLRPPIDHLCELLPRLQARYYSIASSSKVHPNSVHICAVAVEYETKTGRINKGVATSWLRAKEPAGENGGRALVPMYVRKSQFRLPFKATTPVIMVGPGTGVAPFIGFIQERAWLRQQGKEVGETLLYYGCRRSDEDYLYREELAGFHKDGALTQLNVAFSREQPQKVYVQHLLKKDKEHLWKLIHEGGAHIYVCGDARNMARDVQNTFYDIVAEQGAMEHAQAVDYVKKLMTKGRYSLDVWS</sequence>
<comment type="function">
    <text evidence="2">This enzyme is required for electron transfer from NADP to cytochrome P450 in microsomes. It can also provide electron transfer to heme oxygenase and cytochrome B5.</text>
</comment>
<comment type="catalytic activity">
    <reaction evidence="2">
        <text>2 oxidized [cytochrome P450] + NADPH = 2 reduced [cytochrome P450] + NADP(+) + H(+)</text>
        <dbReference type="Rhea" id="RHEA:24040"/>
        <dbReference type="Rhea" id="RHEA-COMP:14627"/>
        <dbReference type="Rhea" id="RHEA-COMP:14628"/>
        <dbReference type="ChEBI" id="CHEBI:15378"/>
        <dbReference type="ChEBI" id="CHEBI:55376"/>
        <dbReference type="ChEBI" id="CHEBI:57783"/>
        <dbReference type="ChEBI" id="CHEBI:58349"/>
        <dbReference type="ChEBI" id="CHEBI:60344"/>
        <dbReference type="EC" id="1.6.2.4"/>
    </reaction>
</comment>
<comment type="cofactor">
    <cofactor evidence="2">
        <name>FAD</name>
        <dbReference type="ChEBI" id="CHEBI:57692"/>
    </cofactor>
    <text evidence="2">Binds 1 FAD per monomer.</text>
</comment>
<comment type="cofactor">
    <cofactor evidence="2">
        <name>FMN</name>
        <dbReference type="ChEBI" id="CHEBI:58210"/>
    </cofactor>
    <text evidence="2">Binds 1 FMN per monomer.</text>
</comment>
<comment type="subcellular location">
    <subcellularLocation>
        <location evidence="2">Endoplasmic reticulum membrane</location>
        <topology evidence="2">Single-pass membrane protein</topology>
        <orientation evidence="2">Cytoplasmic side</orientation>
    </subcellularLocation>
</comment>
<comment type="similarity">
    <text evidence="2">Belongs to the NADPH--cytochrome P450 reductase family.</text>
</comment>
<comment type="similarity">
    <text evidence="2">In the N-terminal section; belongs to the flavodoxin family.</text>
</comment>
<comment type="similarity">
    <text evidence="2">In the C-terminal section; belongs to the flavoprotein pyridine nucleotide cytochrome reductase family.</text>
</comment>
<comment type="sequence caution" evidence="3">
    <conflict type="erroneous initiation">
        <sequence resource="EMBL-CDS" id="AAI03400"/>
    </conflict>
</comment>
<accession>Q3SYT8</accession>
<evidence type="ECO:0000250" key="1">
    <source>
        <dbReference type="UniProtKB" id="P16435"/>
    </source>
</evidence>
<evidence type="ECO:0000255" key="2">
    <source>
        <dbReference type="HAMAP-Rule" id="MF_03212"/>
    </source>
</evidence>
<evidence type="ECO:0000305" key="3"/>
<proteinExistence type="evidence at transcript level"/>
<reference key="1">
    <citation type="submission" date="2005-08" db="EMBL/GenBank/DDBJ databases">
        <authorList>
            <consortium name="NIH - Mammalian Gene Collection (MGC) project"/>
        </authorList>
    </citation>
    <scope>NUCLEOTIDE SEQUENCE [LARGE SCALE MRNA]</scope>
    <source>
        <strain>Crossbred X Angus</strain>
        <tissue>Ileum</tissue>
    </source>
</reference>
<dbReference type="EC" id="1.6.2.4" evidence="2"/>
<dbReference type="EMBL" id="BC103399">
    <property type="protein sequence ID" value="AAI03400.1"/>
    <property type="status" value="ALT_INIT"/>
    <property type="molecule type" value="mRNA"/>
</dbReference>
<dbReference type="RefSeq" id="NP_001030467.1">
    <property type="nucleotide sequence ID" value="NM_001035390.1"/>
</dbReference>
<dbReference type="SMR" id="Q3SYT8"/>
<dbReference type="FunCoup" id="Q3SYT8">
    <property type="interactions" value="2932"/>
</dbReference>
<dbReference type="STRING" id="9913.ENSBTAP00000066469"/>
<dbReference type="PaxDb" id="9913-ENSBTAP00000022718"/>
<dbReference type="PeptideAtlas" id="Q3SYT8"/>
<dbReference type="GeneID" id="532512"/>
<dbReference type="KEGG" id="bta:532512"/>
<dbReference type="CTD" id="5447"/>
<dbReference type="eggNOG" id="KOG1158">
    <property type="taxonomic scope" value="Eukaryota"/>
</dbReference>
<dbReference type="HOGENOM" id="CLU_001570_17_3_1"/>
<dbReference type="InParanoid" id="Q3SYT8"/>
<dbReference type="OrthoDB" id="1856718at2759"/>
<dbReference type="Proteomes" id="UP000009136">
    <property type="component" value="Unplaced"/>
</dbReference>
<dbReference type="GO" id="GO:0005829">
    <property type="term" value="C:cytosol"/>
    <property type="evidence" value="ECO:0000318"/>
    <property type="project" value="GO_Central"/>
</dbReference>
<dbReference type="GO" id="GO:0005789">
    <property type="term" value="C:endoplasmic reticulum membrane"/>
    <property type="evidence" value="ECO:0007669"/>
    <property type="project" value="UniProtKB-SubCell"/>
</dbReference>
<dbReference type="GO" id="GO:0050660">
    <property type="term" value="F:flavin adenine dinucleotide binding"/>
    <property type="evidence" value="ECO:0000318"/>
    <property type="project" value="GO_Central"/>
</dbReference>
<dbReference type="GO" id="GO:0010181">
    <property type="term" value="F:FMN binding"/>
    <property type="evidence" value="ECO:0000318"/>
    <property type="project" value="GO_Central"/>
</dbReference>
<dbReference type="GO" id="GO:0050661">
    <property type="term" value="F:NADP binding"/>
    <property type="evidence" value="ECO:0007669"/>
    <property type="project" value="UniProtKB-UniRule"/>
</dbReference>
<dbReference type="GO" id="GO:0003958">
    <property type="term" value="F:NADPH-hemoprotein reductase activity"/>
    <property type="evidence" value="ECO:0000318"/>
    <property type="project" value="GO_Central"/>
</dbReference>
<dbReference type="GO" id="GO:0006809">
    <property type="term" value="P:nitric oxide biosynthetic process"/>
    <property type="evidence" value="ECO:0000318"/>
    <property type="project" value="GO_Central"/>
</dbReference>
<dbReference type="GO" id="GO:0009725">
    <property type="term" value="P:response to hormone"/>
    <property type="evidence" value="ECO:0000318"/>
    <property type="project" value="GO_Central"/>
</dbReference>
<dbReference type="CDD" id="cd06204">
    <property type="entry name" value="CYPOR"/>
    <property type="match status" value="1"/>
</dbReference>
<dbReference type="FunFam" id="1.20.990.10:FF:000001">
    <property type="entry name" value="NADPH--cytochrome P450 reductase"/>
    <property type="match status" value="1"/>
</dbReference>
<dbReference type="FunFam" id="3.40.50.360:FF:000009">
    <property type="entry name" value="NADPH--cytochrome P450 reductase"/>
    <property type="match status" value="1"/>
</dbReference>
<dbReference type="FunFam" id="3.40.50.80:FF:000001">
    <property type="entry name" value="NADPH--cytochrome P450 reductase 1"/>
    <property type="match status" value="1"/>
</dbReference>
<dbReference type="Gene3D" id="3.40.50.360">
    <property type="match status" value="1"/>
</dbReference>
<dbReference type="Gene3D" id="1.20.990.10">
    <property type="entry name" value="NADPH-cytochrome p450 Reductase, Chain A, domain 3"/>
    <property type="match status" value="1"/>
</dbReference>
<dbReference type="Gene3D" id="3.40.50.80">
    <property type="entry name" value="Nucleotide-binding domain of ferredoxin-NADP reductase (FNR) module"/>
    <property type="match status" value="1"/>
</dbReference>
<dbReference type="Gene3D" id="2.40.30.10">
    <property type="entry name" value="Translation factors"/>
    <property type="match status" value="1"/>
</dbReference>
<dbReference type="HAMAP" id="MF_03212">
    <property type="entry name" value="NCPR"/>
    <property type="match status" value="1"/>
</dbReference>
<dbReference type="InterPro" id="IPR003097">
    <property type="entry name" value="CysJ-like_FAD-binding"/>
</dbReference>
<dbReference type="InterPro" id="IPR017927">
    <property type="entry name" value="FAD-bd_FR_type"/>
</dbReference>
<dbReference type="InterPro" id="IPR001094">
    <property type="entry name" value="Flavdoxin-like"/>
</dbReference>
<dbReference type="InterPro" id="IPR008254">
    <property type="entry name" value="Flavodoxin/NO_synth"/>
</dbReference>
<dbReference type="InterPro" id="IPR001709">
    <property type="entry name" value="Flavoprot_Pyr_Nucl_cyt_Rdtase"/>
</dbReference>
<dbReference type="InterPro" id="IPR029039">
    <property type="entry name" value="Flavoprotein-like_sf"/>
</dbReference>
<dbReference type="InterPro" id="IPR039261">
    <property type="entry name" value="FNR_nucleotide-bd"/>
</dbReference>
<dbReference type="InterPro" id="IPR023173">
    <property type="entry name" value="NADPH_Cyt_P450_Rdtase_alpha"/>
</dbReference>
<dbReference type="InterPro" id="IPR001433">
    <property type="entry name" value="OxRdtase_FAD/NAD-bd"/>
</dbReference>
<dbReference type="InterPro" id="IPR023208">
    <property type="entry name" value="P450R"/>
</dbReference>
<dbReference type="InterPro" id="IPR017938">
    <property type="entry name" value="Riboflavin_synthase-like_b-brl"/>
</dbReference>
<dbReference type="PANTHER" id="PTHR19384:SF17">
    <property type="entry name" value="NADPH--CYTOCHROME P450 REDUCTASE"/>
    <property type="match status" value="1"/>
</dbReference>
<dbReference type="PANTHER" id="PTHR19384">
    <property type="entry name" value="NITRIC OXIDE SYNTHASE-RELATED"/>
    <property type="match status" value="1"/>
</dbReference>
<dbReference type="Pfam" id="PF00667">
    <property type="entry name" value="FAD_binding_1"/>
    <property type="match status" value="1"/>
</dbReference>
<dbReference type="Pfam" id="PF00258">
    <property type="entry name" value="Flavodoxin_1"/>
    <property type="match status" value="1"/>
</dbReference>
<dbReference type="Pfam" id="PF00175">
    <property type="entry name" value="NAD_binding_1"/>
    <property type="match status" value="1"/>
</dbReference>
<dbReference type="PIRSF" id="PIRSF000208">
    <property type="entry name" value="P450R"/>
    <property type="match status" value="1"/>
</dbReference>
<dbReference type="PRINTS" id="PR00369">
    <property type="entry name" value="FLAVODOXIN"/>
</dbReference>
<dbReference type="PRINTS" id="PR00371">
    <property type="entry name" value="FPNCR"/>
</dbReference>
<dbReference type="SUPFAM" id="SSF52343">
    <property type="entry name" value="Ferredoxin reductase-like, C-terminal NADP-linked domain"/>
    <property type="match status" value="1"/>
</dbReference>
<dbReference type="SUPFAM" id="SSF52218">
    <property type="entry name" value="Flavoproteins"/>
    <property type="match status" value="1"/>
</dbReference>
<dbReference type="SUPFAM" id="SSF63380">
    <property type="entry name" value="Riboflavin synthase domain-like"/>
    <property type="match status" value="1"/>
</dbReference>
<dbReference type="PROSITE" id="PS51384">
    <property type="entry name" value="FAD_FR"/>
    <property type="match status" value="1"/>
</dbReference>
<dbReference type="PROSITE" id="PS50902">
    <property type="entry name" value="FLAVODOXIN_LIKE"/>
    <property type="match status" value="1"/>
</dbReference>
<protein>
    <recommendedName>
        <fullName evidence="2">NADPH--cytochrome P450 reductase</fullName>
        <shortName evidence="2">CPR</shortName>
        <shortName evidence="2">P450R</shortName>
        <ecNumber evidence="2">1.6.2.4</ecNumber>
    </recommendedName>
</protein>